<organism>
    <name type="scientific">Pongo abelii</name>
    <name type="common">Sumatran orangutan</name>
    <name type="synonym">Pongo pygmaeus abelii</name>
    <dbReference type="NCBI Taxonomy" id="9601"/>
    <lineage>
        <taxon>Eukaryota</taxon>
        <taxon>Metazoa</taxon>
        <taxon>Chordata</taxon>
        <taxon>Craniata</taxon>
        <taxon>Vertebrata</taxon>
        <taxon>Euteleostomi</taxon>
        <taxon>Mammalia</taxon>
        <taxon>Eutheria</taxon>
        <taxon>Euarchontoglires</taxon>
        <taxon>Primates</taxon>
        <taxon>Haplorrhini</taxon>
        <taxon>Catarrhini</taxon>
        <taxon>Hominidae</taxon>
        <taxon>Pongo</taxon>
    </lineage>
</organism>
<keyword id="KW-0238">DNA-binding</keyword>
<keyword id="KW-0479">Metal-binding</keyword>
<keyword id="KW-0539">Nucleus</keyword>
<keyword id="KW-1185">Reference proteome</keyword>
<keyword id="KW-0677">Repeat</keyword>
<keyword id="KW-0804">Transcription</keyword>
<keyword id="KW-0805">Transcription regulation</keyword>
<keyword id="KW-0862">Zinc</keyword>
<keyword id="KW-0863">Zinc-finger</keyword>
<protein>
    <recommendedName>
        <fullName>Zinc finger protein 182</fullName>
    </recommendedName>
    <alternativeName>
        <fullName>Zinc finger protein 21</fullName>
    </alternativeName>
</protein>
<accession>Q5R9S5</accession>
<comment type="function">
    <text>May be involved in transcriptional regulation.</text>
</comment>
<comment type="subcellular location">
    <subcellularLocation>
        <location evidence="4">Nucleus</location>
    </subcellularLocation>
</comment>
<comment type="similarity">
    <text evidence="4">Belongs to the krueppel C2H2-type zinc-finger protein family.</text>
</comment>
<evidence type="ECO:0000255" key="1">
    <source>
        <dbReference type="PROSITE-ProRule" id="PRU00042"/>
    </source>
</evidence>
<evidence type="ECO:0000255" key="2">
    <source>
        <dbReference type="PROSITE-ProRule" id="PRU00119"/>
    </source>
</evidence>
<evidence type="ECO:0000256" key="3">
    <source>
        <dbReference type="SAM" id="MobiDB-lite"/>
    </source>
</evidence>
<evidence type="ECO:0000305" key="4"/>
<name>ZN182_PONAB</name>
<reference key="1">
    <citation type="submission" date="2004-11" db="EMBL/GenBank/DDBJ databases">
        <authorList>
            <consortium name="The German cDNA consortium"/>
        </authorList>
    </citation>
    <scope>NUCLEOTIDE SEQUENCE [LARGE SCALE MRNA]</scope>
    <source>
        <tissue>Kidney</tissue>
    </source>
</reference>
<sequence>MAKPQGLVTFEDVAVDFTQEEWQYLNPPQRTLYRDVMLETYSNLVFVGQQVTKPNLILKLEVEECPAEGKIPFWNFPEVCQVDEQIERQHQDDQDKCLLMQVGFSDKKTVTTKSACDCHEFGNILHLSTNLVASIQRPDKHESFGNNMEDNLDLFSRSSAENKYDNGCAKLFFHTEYEKTNLGVKPYGYKECGKGLRRKKGLSLHQRIKNGEKPFECTACRKTFSKKSHLIVHWRTHTGEKPFGCTECGKAFSQKSQLIIHLRTHTGERPFECPECGKAFREKSTVIIHYRTHTGEKPHECNECGKAFTQKSNLIVHQKTHTGEKTYECTKCGESFIQKLDLIIHHSTHTGKKPHECNECKKAFSDKSTLIIHQRTHTGEKPHKCTECGKSFNEKSTLIVHQRTHTGEKPYECDVCGKTFTQKSNLGVHQRTHSGEKPFECNECEKAFSQKSYLMLHQRGHTGEKPYECNECEKAFSQKSYLIIHQRTHTEEKPYKCNECGKAFREKSKLIIHQRIHTGEKPYECPVCWKAFSQKSQLIIHQRTHTGEKPYACTECGKAFREKSTFTVHQRTHTGEKPYKCTECGKAFTQKSNLIVHQRTHTGKKAHGRGHTRKSKFMAH</sequence>
<gene>
    <name type="primary">ZNF182</name>
    <name type="synonym">ZNF21</name>
</gene>
<proteinExistence type="evidence at transcript level"/>
<dbReference type="EMBL" id="CR859307">
    <property type="protein sequence ID" value="CAH91485.1"/>
    <property type="molecule type" value="mRNA"/>
</dbReference>
<dbReference type="RefSeq" id="NP_001125874.1">
    <property type="nucleotide sequence ID" value="NM_001132402.1"/>
</dbReference>
<dbReference type="SMR" id="Q5R9S5"/>
<dbReference type="GeneID" id="100172805"/>
<dbReference type="KEGG" id="pon:100172805"/>
<dbReference type="CTD" id="7569"/>
<dbReference type="eggNOG" id="KOG1721">
    <property type="taxonomic scope" value="Eukaryota"/>
</dbReference>
<dbReference type="InParanoid" id="Q5R9S5"/>
<dbReference type="OrthoDB" id="9411774at2759"/>
<dbReference type="Proteomes" id="UP000001595">
    <property type="component" value="Unplaced"/>
</dbReference>
<dbReference type="GO" id="GO:0005634">
    <property type="term" value="C:nucleus"/>
    <property type="evidence" value="ECO:0007669"/>
    <property type="project" value="UniProtKB-SubCell"/>
</dbReference>
<dbReference type="GO" id="GO:0000981">
    <property type="term" value="F:DNA-binding transcription factor activity, RNA polymerase II-specific"/>
    <property type="evidence" value="ECO:0007669"/>
    <property type="project" value="TreeGrafter"/>
</dbReference>
<dbReference type="GO" id="GO:0000978">
    <property type="term" value="F:RNA polymerase II cis-regulatory region sequence-specific DNA binding"/>
    <property type="evidence" value="ECO:0007669"/>
    <property type="project" value="TreeGrafter"/>
</dbReference>
<dbReference type="GO" id="GO:0008270">
    <property type="term" value="F:zinc ion binding"/>
    <property type="evidence" value="ECO:0007669"/>
    <property type="project" value="UniProtKB-KW"/>
</dbReference>
<dbReference type="CDD" id="cd07765">
    <property type="entry name" value="KRAB_A-box"/>
    <property type="match status" value="1"/>
</dbReference>
<dbReference type="FunFam" id="3.30.160.60:FF:000029">
    <property type="entry name" value="GLI family zinc finger 4"/>
    <property type="match status" value="1"/>
</dbReference>
<dbReference type="FunFam" id="3.30.160.60:FF:000111">
    <property type="entry name" value="GLI family zinc finger 4"/>
    <property type="match status" value="1"/>
</dbReference>
<dbReference type="FunFam" id="3.30.160.60:FF:001073">
    <property type="entry name" value="zinc finger protein 182"/>
    <property type="match status" value="1"/>
</dbReference>
<dbReference type="FunFam" id="3.30.160.60:FF:000053">
    <property type="entry name" value="zinc finger protein 182 isoform X1"/>
    <property type="match status" value="1"/>
</dbReference>
<dbReference type="FunFam" id="3.30.160.60:FF:000824">
    <property type="entry name" value="Zinc finger protein 184"/>
    <property type="match status" value="1"/>
</dbReference>
<dbReference type="FunFam" id="3.30.160.60:FF:000295">
    <property type="entry name" value="zinc finger protein 19"/>
    <property type="match status" value="1"/>
</dbReference>
<dbReference type="FunFam" id="3.30.160.60:FF:000622">
    <property type="entry name" value="zinc finger protein 26 isoform X3"/>
    <property type="match status" value="1"/>
</dbReference>
<dbReference type="FunFam" id="3.30.160.60:FF:002343">
    <property type="entry name" value="Zinc finger protein 33A"/>
    <property type="match status" value="4"/>
</dbReference>
<dbReference type="FunFam" id="3.30.160.60:FF:000848">
    <property type="entry name" value="Zinc finger protein 35"/>
    <property type="match status" value="1"/>
</dbReference>
<dbReference type="FunFam" id="3.30.160.60:FF:000023">
    <property type="entry name" value="zinc finger protein 37 homolog"/>
    <property type="match status" value="1"/>
</dbReference>
<dbReference type="FunFam" id="3.30.160.60:FF:000953">
    <property type="entry name" value="Zinc finger protein 691"/>
    <property type="match status" value="1"/>
</dbReference>
<dbReference type="Gene3D" id="6.10.140.140">
    <property type="match status" value="1"/>
</dbReference>
<dbReference type="Gene3D" id="3.30.160.60">
    <property type="entry name" value="Classic Zinc Finger"/>
    <property type="match status" value="15"/>
</dbReference>
<dbReference type="InterPro" id="IPR050752">
    <property type="entry name" value="C2H2-ZF_domain"/>
</dbReference>
<dbReference type="InterPro" id="IPR001909">
    <property type="entry name" value="KRAB"/>
</dbReference>
<dbReference type="InterPro" id="IPR036051">
    <property type="entry name" value="KRAB_dom_sf"/>
</dbReference>
<dbReference type="InterPro" id="IPR036236">
    <property type="entry name" value="Znf_C2H2_sf"/>
</dbReference>
<dbReference type="InterPro" id="IPR013087">
    <property type="entry name" value="Znf_C2H2_type"/>
</dbReference>
<dbReference type="PANTHER" id="PTHR24384">
    <property type="entry name" value="FINGER PUTATIVE TRANSCRIPTION FACTOR FAMILY-RELATED"/>
    <property type="match status" value="1"/>
</dbReference>
<dbReference type="PANTHER" id="PTHR24384:SF242">
    <property type="entry name" value="ZINC FINGER PROTEIN 628"/>
    <property type="match status" value="1"/>
</dbReference>
<dbReference type="Pfam" id="PF01352">
    <property type="entry name" value="KRAB"/>
    <property type="match status" value="1"/>
</dbReference>
<dbReference type="Pfam" id="PF00096">
    <property type="entry name" value="zf-C2H2"/>
    <property type="match status" value="14"/>
</dbReference>
<dbReference type="SMART" id="SM00349">
    <property type="entry name" value="KRAB"/>
    <property type="match status" value="1"/>
</dbReference>
<dbReference type="SMART" id="SM00355">
    <property type="entry name" value="ZnF_C2H2"/>
    <property type="match status" value="14"/>
</dbReference>
<dbReference type="SUPFAM" id="SSF57667">
    <property type="entry name" value="beta-beta-alpha zinc fingers"/>
    <property type="match status" value="8"/>
</dbReference>
<dbReference type="SUPFAM" id="SSF109640">
    <property type="entry name" value="KRAB domain (Kruppel-associated box)"/>
    <property type="match status" value="1"/>
</dbReference>
<dbReference type="PROSITE" id="PS50805">
    <property type="entry name" value="KRAB"/>
    <property type="match status" value="1"/>
</dbReference>
<dbReference type="PROSITE" id="PS00028">
    <property type="entry name" value="ZINC_FINGER_C2H2_1"/>
    <property type="match status" value="14"/>
</dbReference>
<dbReference type="PROSITE" id="PS50157">
    <property type="entry name" value="ZINC_FINGER_C2H2_2"/>
    <property type="match status" value="15"/>
</dbReference>
<feature type="chain" id="PRO_0000047347" description="Zinc finger protein 182">
    <location>
        <begin position="1"/>
        <end position="620"/>
    </location>
</feature>
<feature type="domain" description="KRAB" evidence="2">
    <location>
        <begin position="8"/>
        <end position="79"/>
    </location>
</feature>
<feature type="zinc finger region" description="C2H2-type 1; degenerate" evidence="1">
    <location>
        <begin position="187"/>
        <end position="209"/>
    </location>
</feature>
<feature type="zinc finger region" description="C2H2-type 2" evidence="1">
    <location>
        <begin position="215"/>
        <end position="237"/>
    </location>
</feature>
<feature type="zinc finger region" description="C2H2-type 3" evidence="1">
    <location>
        <begin position="243"/>
        <end position="265"/>
    </location>
</feature>
<feature type="zinc finger region" description="C2H2-type 4" evidence="1">
    <location>
        <begin position="271"/>
        <end position="293"/>
    </location>
</feature>
<feature type="zinc finger region" description="C2H2-type 5" evidence="1">
    <location>
        <begin position="299"/>
        <end position="321"/>
    </location>
</feature>
<feature type="zinc finger region" description="C2H2-type 6" evidence="1">
    <location>
        <begin position="327"/>
        <end position="349"/>
    </location>
</feature>
<feature type="zinc finger region" description="C2H2-type 7" evidence="1">
    <location>
        <begin position="355"/>
        <end position="377"/>
    </location>
</feature>
<feature type="zinc finger region" description="C2H2-type 8" evidence="1">
    <location>
        <begin position="383"/>
        <end position="405"/>
    </location>
</feature>
<feature type="zinc finger region" description="C2H2-type 9" evidence="1">
    <location>
        <begin position="411"/>
        <end position="433"/>
    </location>
</feature>
<feature type="zinc finger region" description="C2H2-type 10" evidence="1">
    <location>
        <begin position="439"/>
        <end position="461"/>
    </location>
</feature>
<feature type="zinc finger region" description="C2H2-type 11" evidence="1">
    <location>
        <begin position="467"/>
        <end position="489"/>
    </location>
</feature>
<feature type="zinc finger region" description="C2H2-type 12" evidence="1">
    <location>
        <begin position="495"/>
        <end position="517"/>
    </location>
</feature>
<feature type="zinc finger region" description="C2H2-type 13" evidence="1">
    <location>
        <begin position="523"/>
        <end position="545"/>
    </location>
</feature>
<feature type="zinc finger region" description="C2H2-type 14" evidence="1">
    <location>
        <begin position="551"/>
        <end position="573"/>
    </location>
</feature>
<feature type="zinc finger region" description="C2H2-type 15" evidence="1">
    <location>
        <begin position="579"/>
        <end position="601"/>
    </location>
</feature>
<feature type="region of interest" description="Disordered" evidence="3">
    <location>
        <begin position="599"/>
        <end position="620"/>
    </location>
</feature>